<sequence length="343" mass="38128">MDNQAERESEAGVGLQRDEDDAPLCEDVELQDGDLSPEEKIFLREFPRLKEDLKGNIDKLRALADDIDKTHKKFTKANMVATSTAVISGVMSLLGLALAPATGGGSLLLSTAGQGLATAAGVTSIVSGTLERSKNKEAQARAEDILPTYDQEDREDEEEKADYVTAAGKIIYNLRNTLKYAKKNVRAFWKLRANPRLANATKRLLTTGQVSSRSRVQVQKAFAGTTLAMTKNARVLGGVMSAFSLGYDLATLSKEWKHLKEGARTKFAEELRAKALELERKLTELTQLYKSLQQKVRSRARGVGKDLTGTCETEAYWKELREHVWMWLWLCVCLCVCVYVQFT</sequence>
<accession>Q9BWW8</accession>
<accession>Q5R3S1</accession>
<accession>Q658J1</accession>
<accession>Q8IXX6</accession>
<accession>Q9UGG1</accession>
<keyword id="KW-0963">Cytoplasm</keyword>
<keyword id="KW-0445">Lipid transport</keyword>
<keyword id="KW-1267">Proteomics identification</keyword>
<keyword id="KW-1185">Reference proteome</keyword>
<keyword id="KW-0813">Transport</keyword>
<dbReference type="EMBL" id="AY014879">
    <property type="protein sequence ID" value="AAK07724.1"/>
    <property type="molecule type" value="mRNA"/>
</dbReference>
<dbReference type="EMBL" id="AY358210">
    <property type="protein sequence ID" value="AAQ88577.1"/>
    <property type="molecule type" value="mRNA"/>
</dbReference>
<dbReference type="EMBL" id="CR456381">
    <property type="protein sequence ID" value="CAG30267.1"/>
    <property type="molecule type" value="mRNA"/>
</dbReference>
<dbReference type="EMBL" id="AL834420">
    <property type="protein sequence ID" value="CAH56356.1"/>
    <property type="molecule type" value="mRNA"/>
</dbReference>
<dbReference type="EMBL" id="Z79996">
    <property type="status" value="NOT_ANNOTATED_CDS"/>
    <property type="molecule type" value="Genomic_DNA"/>
</dbReference>
<dbReference type="EMBL" id="BC038950">
    <property type="protein sequence ID" value="AAH38950.2"/>
    <property type="molecule type" value="mRNA"/>
</dbReference>
<dbReference type="EMBL" id="BC047864">
    <property type="protein sequence ID" value="AAH47864.1"/>
    <property type="molecule type" value="mRNA"/>
</dbReference>
<dbReference type="CCDS" id="CCDS13919.1"/>
<dbReference type="RefSeq" id="NP_085144.1">
    <property type="nucleotide sequence ID" value="NM_030641.4"/>
</dbReference>
<dbReference type="RefSeq" id="XP_011528694.1">
    <property type="nucleotide sequence ID" value="XM_011530392.4"/>
</dbReference>
<dbReference type="RefSeq" id="XP_054181918.1">
    <property type="nucleotide sequence ID" value="XM_054325943.1"/>
</dbReference>
<dbReference type="SMR" id="Q9BWW8"/>
<dbReference type="BioGRID" id="123323">
    <property type="interactions" value="14"/>
</dbReference>
<dbReference type="FunCoup" id="Q9BWW8">
    <property type="interactions" value="16"/>
</dbReference>
<dbReference type="IntAct" id="Q9BWW8">
    <property type="interactions" value="10"/>
</dbReference>
<dbReference type="STRING" id="9606.ENSP00000386280"/>
<dbReference type="iPTMnet" id="Q9BWW8"/>
<dbReference type="PhosphoSitePlus" id="Q9BWW8"/>
<dbReference type="BioMuta" id="APOL6"/>
<dbReference type="DMDM" id="17433286"/>
<dbReference type="jPOST" id="Q9BWW8"/>
<dbReference type="MassIVE" id="Q9BWW8"/>
<dbReference type="PaxDb" id="9606-ENSP00000386280"/>
<dbReference type="PeptideAtlas" id="Q9BWW8"/>
<dbReference type="ProteomicsDB" id="79335"/>
<dbReference type="Antibodypedia" id="25455">
    <property type="antibodies" value="255 antibodies from 29 providers"/>
</dbReference>
<dbReference type="DNASU" id="80830"/>
<dbReference type="Ensembl" id="ENST00000409652.5">
    <property type="protein sequence ID" value="ENSP00000386280.3"/>
    <property type="gene ID" value="ENSG00000221963.6"/>
</dbReference>
<dbReference type="GeneID" id="80830"/>
<dbReference type="KEGG" id="hsa:80830"/>
<dbReference type="MANE-Select" id="ENST00000409652.5">
    <property type="protein sequence ID" value="ENSP00000386280.3"/>
    <property type="RefSeq nucleotide sequence ID" value="NM_030641.4"/>
    <property type="RefSeq protein sequence ID" value="NP_085144.1"/>
</dbReference>
<dbReference type="UCSC" id="uc003aoe.4">
    <property type="organism name" value="human"/>
</dbReference>
<dbReference type="AGR" id="HGNC:14870"/>
<dbReference type="CTD" id="80830"/>
<dbReference type="DisGeNET" id="80830"/>
<dbReference type="GeneCards" id="APOL6"/>
<dbReference type="HGNC" id="HGNC:14870">
    <property type="gene designation" value="APOL6"/>
</dbReference>
<dbReference type="HPA" id="ENSG00000221963">
    <property type="expression patterns" value="Tissue enhanced (liver)"/>
</dbReference>
<dbReference type="MIM" id="607256">
    <property type="type" value="gene"/>
</dbReference>
<dbReference type="neXtProt" id="NX_Q9BWW8"/>
<dbReference type="OpenTargets" id="ENSG00000221963"/>
<dbReference type="PharmGKB" id="PA24909"/>
<dbReference type="VEuPathDB" id="HostDB:ENSG00000221963"/>
<dbReference type="eggNOG" id="ENOG502QPNS">
    <property type="taxonomic scope" value="Eukaryota"/>
</dbReference>
<dbReference type="GeneTree" id="ENSGT01030000234599"/>
<dbReference type="HOGENOM" id="CLU_046288_0_1_1"/>
<dbReference type="InParanoid" id="Q9BWW8"/>
<dbReference type="OMA" id="KLRADPH"/>
<dbReference type="OrthoDB" id="6146578at2759"/>
<dbReference type="PAN-GO" id="Q9BWW8">
    <property type="GO annotations" value="1 GO annotation based on evolutionary models"/>
</dbReference>
<dbReference type="PhylomeDB" id="Q9BWW8"/>
<dbReference type="TreeFam" id="TF334681"/>
<dbReference type="PathwayCommons" id="Q9BWW8"/>
<dbReference type="SignaLink" id="Q9BWW8"/>
<dbReference type="BioGRID-ORCS" id="80830">
    <property type="hits" value="16 hits in 1157 CRISPR screens"/>
</dbReference>
<dbReference type="ChiTaRS" id="APOL6">
    <property type="organism name" value="human"/>
</dbReference>
<dbReference type="GeneWiki" id="APOL6"/>
<dbReference type="GenomeRNAi" id="80830"/>
<dbReference type="Pharos" id="Q9BWW8">
    <property type="development level" value="Tbio"/>
</dbReference>
<dbReference type="PRO" id="PR:Q9BWW8"/>
<dbReference type="Proteomes" id="UP000005640">
    <property type="component" value="Chromosome 22"/>
</dbReference>
<dbReference type="RNAct" id="Q9BWW8">
    <property type="molecule type" value="protein"/>
</dbReference>
<dbReference type="Bgee" id="ENSG00000221963">
    <property type="expression patterns" value="Expressed in pericardium and 180 other cell types or tissues"/>
</dbReference>
<dbReference type="ExpressionAtlas" id="Q9BWW8">
    <property type="expression patterns" value="baseline and differential"/>
</dbReference>
<dbReference type="GO" id="GO:0005737">
    <property type="term" value="C:cytoplasm"/>
    <property type="evidence" value="ECO:0007669"/>
    <property type="project" value="UniProtKB-SubCell"/>
</dbReference>
<dbReference type="GO" id="GO:0005576">
    <property type="term" value="C:extracellular region"/>
    <property type="evidence" value="ECO:0007669"/>
    <property type="project" value="InterPro"/>
</dbReference>
<dbReference type="GO" id="GO:0008289">
    <property type="term" value="F:lipid binding"/>
    <property type="evidence" value="ECO:0000318"/>
    <property type="project" value="GO_Central"/>
</dbReference>
<dbReference type="GO" id="GO:0006869">
    <property type="term" value="P:lipid transport"/>
    <property type="evidence" value="ECO:0007669"/>
    <property type="project" value="UniProtKB-KW"/>
</dbReference>
<dbReference type="GO" id="GO:0042157">
    <property type="term" value="P:lipoprotein metabolic process"/>
    <property type="evidence" value="ECO:0007669"/>
    <property type="project" value="InterPro"/>
</dbReference>
<dbReference type="InterPro" id="IPR008405">
    <property type="entry name" value="ApoL"/>
</dbReference>
<dbReference type="PANTHER" id="PTHR14096">
    <property type="entry name" value="APOLIPOPROTEIN L"/>
    <property type="match status" value="1"/>
</dbReference>
<dbReference type="PANTHER" id="PTHR14096:SF7">
    <property type="entry name" value="APOLIPOPROTEIN L6"/>
    <property type="match status" value="1"/>
</dbReference>
<dbReference type="Pfam" id="PF05461">
    <property type="entry name" value="ApoL"/>
    <property type="match status" value="1"/>
</dbReference>
<reference key="1">
    <citation type="journal article" date="2001" name="Genomics">
        <title>The human apolipoprotein L gene cluster: identification, classification, and sites of distribution.</title>
        <authorList>
            <person name="Page N.M."/>
            <person name="Butlin D.J."/>
            <person name="Lomthaisong K."/>
            <person name="Lowry P.J."/>
        </authorList>
    </citation>
    <scope>NUCLEOTIDE SEQUENCE [MRNA]</scope>
    <source>
        <tissue>Placenta</tissue>
    </source>
</reference>
<reference key="2">
    <citation type="journal article" date="2003" name="Genome Res.">
        <title>The secreted protein discovery initiative (SPDI), a large-scale effort to identify novel human secreted and transmembrane proteins: a bioinformatics assessment.</title>
        <authorList>
            <person name="Clark H.F."/>
            <person name="Gurney A.L."/>
            <person name="Abaya E."/>
            <person name="Baker K."/>
            <person name="Baldwin D.T."/>
            <person name="Brush J."/>
            <person name="Chen J."/>
            <person name="Chow B."/>
            <person name="Chui C."/>
            <person name="Crowley C."/>
            <person name="Currell B."/>
            <person name="Deuel B."/>
            <person name="Dowd P."/>
            <person name="Eaton D."/>
            <person name="Foster J.S."/>
            <person name="Grimaldi C."/>
            <person name="Gu Q."/>
            <person name="Hass P.E."/>
            <person name="Heldens S."/>
            <person name="Huang A."/>
            <person name="Kim H.S."/>
            <person name="Klimowski L."/>
            <person name="Jin Y."/>
            <person name="Johnson S."/>
            <person name="Lee J."/>
            <person name="Lewis L."/>
            <person name="Liao D."/>
            <person name="Mark M.R."/>
            <person name="Robbie E."/>
            <person name="Sanchez C."/>
            <person name="Schoenfeld J."/>
            <person name="Seshagiri S."/>
            <person name="Simmons L."/>
            <person name="Singh J."/>
            <person name="Smith V."/>
            <person name="Stinson J."/>
            <person name="Vagts A."/>
            <person name="Vandlen R.L."/>
            <person name="Watanabe C."/>
            <person name="Wieand D."/>
            <person name="Woods K."/>
            <person name="Xie M.-H."/>
            <person name="Yansura D.G."/>
            <person name="Yi S."/>
            <person name="Yu G."/>
            <person name="Yuan J."/>
            <person name="Zhang M."/>
            <person name="Zhang Z."/>
            <person name="Goddard A.D."/>
            <person name="Wood W.I."/>
            <person name="Godowski P.J."/>
            <person name="Gray A.M."/>
        </authorList>
    </citation>
    <scope>NUCLEOTIDE SEQUENCE [LARGE SCALE MRNA]</scope>
</reference>
<reference key="3">
    <citation type="journal article" date="2004" name="Genome Biol.">
        <title>A genome annotation-driven approach to cloning the human ORFeome.</title>
        <authorList>
            <person name="Collins J.E."/>
            <person name="Wright C.L."/>
            <person name="Edwards C.A."/>
            <person name="Davis M.P."/>
            <person name="Grinham J.A."/>
            <person name="Cole C.G."/>
            <person name="Goward M.E."/>
            <person name="Aguado B."/>
            <person name="Mallya M."/>
            <person name="Mokrab Y."/>
            <person name="Huckle E.J."/>
            <person name="Beare D.M."/>
            <person name="Dunham I."/>
        </authorList>
    </citation>
    <scope>NUCLEOTIDE SEQUENCE [LARGE SCALE MRNA]</scope>
</reference>
<reference key="4">
    <citation type="journal article" date="2007" name="BMC Genomics">
        <title>The full-ORF clone resource of the German cDNA consortium.</title>
        <authorList>
            <person name="Bechtel S."/>
            <person name="Rosenfelder H."/>
            <person name="Duda A."/>
            <person name="Schmidt C.P."/>
            <person name="Ernst U."/>
            <person name="Wellenreuther R."/>
            <person name="Mehrle A."/>
            <person name="Schuster C."/>
            <person name="Bahr A."/>
            <person name="Bloecker H."/>
            <person name="Heubner D."/>
            <person name="Hoerlein A."/>
            <person name="Michel G."/>
            <person name="Wedler H."/>
            <person name="Koehrer K."/>
            <person name="Ottenwaelder B."/>
            <person name="Poustka A."/>
            <person name="Wiemann S."/>
            <person name="Schupp I."/>
        </authorList>
    </citation>
    <scope>NUCLEOTIDE SEQUENCE [LARGE SCALE MRNA]</scope>
    <scope>VARIANT LYS-173</scope>
    <source>
        <tissue>Lymph node</tissue>
    </source>
</reference>
<reference key="5">
    <citation type="journal article" date="1999" name="Nature">
        <title>The DNA sequence of human chromosome 22.</title>
        <authorList>
            <person name="Dunham I."/>
            <person name="Hunt A.R."/>
            <person name="Collins J.E."/>
            <person name="Bruskiewich R."/>
            <person name="Beare D.M."/>
            <person name="Clamp M."/>
            <person name="Smink L.J."/>
            <person name="Ainscough R."/>
            <person name="Almeida J.P."/>
            <person name="Babbage A.K."/>
            <person name="Bagguley C."/>
            <person name="Bailey J."/>
            <person name="Barlow K.F."/>
            <person name="Bates K.N."/>
            <person name="Beasley O.P."/>
            <person name="Bird C.P."/>
            <person name="Blakey S.E."/>
            <person name="Bridgeman A.M."/>
            <person name="Buck D."/>
            <person name="Burgess J."/>
            <person name="Burrill W.D."/>
            <person name="Burton J."/>
            <person name="Carder C."/>
            <person name="Carter N.P."/>
            <person name="Chen Y."/>
            <person name="Clark G."/>
            <person name="Clegg S.M."/>
            <person name="Cobley V.E."/>
            <person name="Cole C.G."/>
            <person name="Collier R.E."/>
            <person name="Connor R."/>
            <person name="Conroy D."/>
            <person name="Corby N.R."/>
            <person name="Coville G.J."/>
            <person name="Cox A.V."/>
            <person name="Davis J."/>
            <person name="Dawson E."/>
            <person name="Dhami P.D."/>
            <person name="Dockree C."/>
            <person name="Dodsworth S.J."/>
            <person name="Durbin R.M."/>
            <person name="Ellington A.G."/>
            <person name="Evans K.L."/>
            <person name="Fey J.M."/>
            <person name="Fleming K."/>
            <person name="French L."/>
            <person name="Garner A.A."/>
            <person name="Gilbert J.G.R."/>
            <person name="Goward M.E."/>
            <person name="Grafham D.V."/>
            <person name="Griffiths M.N.D."/>
            <person name="Hall C."/>
            <person name="Hall R.E."/>
            <person name="Hall-Tamlyn G."/>
            <person name="Heathcott R.W."/>
            <person name="Ho S."/>
            <person name="Holmes S."/>
            <person name="Hunt S.E."/>
            <person name="Jones M.C."/>
            <person name="Kershaw J."/>
            <person name="Kimberley A.M."/>
            <person name="King A."/>
            <person name="Laird G.K."/>
            <person name="Langford C.F."/>
            <person name="Leversha M.A."/>
            <person name="Lloyd C."/>
            <person name="Lloyd D.M."/>
            <person name="Martyn I.D."/>
            <person name="Mashreghi-Mohammadi M."/>
            <person name="Matthews L.H."/>
            <person name="Mccann O.T."/>
            <person name="Mcclay J."/>
            <person name="Mclaren S."/>
            <person name="McMurray A.A."/>
            <person name="Milne S.A."/>
            <person name="Mortimore B.J."/>
            <person name="Odell C.N."/>
            <person name="Pavitt R."/>
            <person name="Pearce A.V."/>
            <person name="Pearson D."/>
            <person name="Phillimore B.J.C.T."/>
            <person name="Phillips S.H."/>
            <person name="Plumb R.W."/>
            <person name="Ramsay H."/>
            <person name="Ramsey Y."/>
            <person name="Rogers L."/>
            <person name="Ross M.T."/>
            <person name="Scott C.E."/>
            <person name="Sehra H.K."/>
            <person name="Skuce C.D."/>
            <person name="Smalley S."/>
            <person name="Smith M.L."/>
            <person name="Soderlund C."/>
            <person name="Spragon L."/>
            <person name="Steward C.A."/>
            <person name="Sulston J.E."/>
            <person name="Swann R.M."/>
            <person name="Vaudin M."/>
            <person name="Wall M."/>
            <person name="Wallis J.M."/>
            <person name="Whiteley M.N."/>
            <person name="Willey D.L."/>
            <person name="Williams L."/>
            <person name="Williams S.A."/>
            <person name="Williamson H."/>
            <person name="Wilmer T.E."/>
            <person name="Wilming L."/>
            <person name="Wright C.L."/>
            <person name="Hubbard T."/>
            <person name="Bentley D.R."/>
            <person name="Beck S."/>
            <person name="Rogers J."/>
            <person name="Shimizu N."/>
            <person name="Minoshima S."/>
            <person name="Kawasaki K."/>
            <person name="Sasaki T."/>
            <person name="Asakawa S."/>
            <person name="Kudoh J."/>
            <person name="Shintani A."/>
            <person name="Shibuya K."/>
            <person name="Yoshizaki Y."/>
            <person name="Aoki N."/>
            <person name="Mitsuyama S."/>
            <person name="Roe B.A."/>
            <person name="Chen F."/>
            <person name="Chu L."/>
            <person name="Crabtree J."/>
            <person name="Deschamps S."/>
            <person name="Do A."/>
            <person name="Do T."/>
            <person name="Dorman A."/>
            <person name="Fang F."/>
            <person name="Fu Y."/>
            <person name="Hu P."/>
            <person name="Hua A."/>
            <person name="Kenton S."/>
            <person name="Lai H."/>
            <person name="Lao H.I."/>
            <person name="Lewis J."/>
            <person name="Lewis S."/>
            <person name="Lin S.-P."/>
            <person name="Loh P."/>
            <person name="Malaj E."/>
            <person name="Nguyen T."/>
            <person name="Pan H."/>
            <person name="Phan S."/>
            <person name="Qi S."/>
            <person name="Qian Y."/>
            <person name="Ray L."/>
            <person name="Ren Q."/>
            <person name="Shaull S."/>
            <person name="Sloan D."/>
            <person name="Song L."/>
            <person name="Wang Q."/>
            <person name="Wang Y."/>
            <person name="Wang Z."/>
            <person name="White J."/>
            <person name="Willingham D."/>
            <person name="Wu H."/>
            <person name="Yao Z."/>
            <person name="Zhan M."/>
            <person name="Zhang G."/>
            <person name="Chissoe S."/>
            <person name="Murray J."/>
            <person name="Miller N."/>
            <person name="Minx P."/>
            <person name="Fulton R."/>
            <person name="Johnson D."/>
            <person name="Bemis G."/>
            <person name="Bentley D."/>
            <person name="Bradshaw H."/>
            <person name="Bourne S."/>
            <person name="Cordes M."/>
            <person name="Du Z."/>
            <person name="Fulton L."/>
            <person name="Goela D."/>
            <person name="Graves T."/>
            <person name="Hawkins J."/>
            <person name="Hinds K."/>
            <person name="Kemp K."/>
            <person name="Latreille P."/>
            <person name="Layman D."/>
            <person name="Ozersky P."/>
            <person name="Rohlfing T."/>
            <person name="Scheet P."/>
            <person name="Walker C."/>
            <person name="Wamsley A."/>
            <person name="Wohldmann P."/>
            <person name="Pepin K."/>
            <person name="Nelson J."/>
            <person name="Korf I."/>
            <person name="Bedell J.A."/>
            <person name="Hillier L.W."/>
            <person name="Mardis E."/>
            <person name="Waterston R."/>
            <person name="Wilson R."/>
            <person name="Emanuel B.S."/>
            <person name="Shaikh T."/>
            <person name="Kurahashi H."/>
            <person name="Saitta S."/>
            <person name="Budarf M.L."/>
            <person name="McDermid H.E."/>
            <person name="Johnson A."/>
            <person name="Wong A.C.C."/>
            <person name="Morrow B.E."/>
            <person name="Edelmann L."/>
            <person name="Kim U.J."/>
            <person name="Shizuya H."/>
            <person name="Simon M.I."/>
            <person name="Dumanski J.P."/>
            <person name="Peyrard M."/>
            <person name="Kedra D."/>
            <person name="Seroussi E."/>
            <person name="Fransson I."/>
            <person name="Tapia I."/>
            <person name="Bruder C.E."/>
            <person name="O'Brien K.P."/>
            <person name="Wilkinson P."/>
            <person name="Bodenteich A."/>
            <person name="Hartman K."/>
            <person name="Hu X."/>
            <person name="Khan A.S."/>
            <person name="Lane L."/>
            <person name="Tilahun Y."/>
            <person name="Wright H."/>
        </authorList>
    </citation>
    <scope>NUCLEOTIDE SEQUENCE [LARGE SCALE GENOMIC DNA]</scope>
</reference>
<reference key="6">
    <citation type="journal article" date="2004" name="Genome Res.">
        <title>The status, quality, and expansion of the NIH full-length cDNA project: the Mammalian Gene Collection (MGC).</title>
        <authorList>
            <consortium name="The MGC Project Team"/>
        </authorList>
    </citation>
    <scope>NUCLEOTIDE SEQUENCE [LARGE SCALE MRNA]</scope>
    <source>
        <tissue>Lymph</tissue>
    </source>
</reference>
<feature type="chain" id="PRO_0000137604" description="Apolipoprotein L6">
    <location>
        <begin position="1"/>
        <end position="343"/>
    </location>
</feature>
<feature type="region of interest" description="Disordered" evidence="1">
    <location>
        <begin position="1"/>
        <end position="24"/>
    </location>
</feature>
<feature type="compositionally biased region" description="Basic and acidic residues" evidence="1">
    <location>
        <begin position="1"/>
        <end position="10"/>
    </location>
</feature>
<feature type="sequence variant" id="VAR_053013" description="In dbSNP:rs5999923." evidence="2">
    <original>N</original>
    <variation>K</variation>
    <location>
        <position position="173"/>
    </location>
</feature>
<name>APOL6_HUMAN</name>
<organism>
    <name type="scientific">Homo sapiens</name>
    <name type="common">Human</name>
    <dbReference type="NCBI Taxonomy" id="9606"/>
    <lineage>
        <taxon>Eukaryota</taxon>
        <taxon>Metazoa</taxon>
        <taxon>Chordata</taxon>
        <taxon>Craniata</taxon>
        <taxon>Vertebrata</taxon>
        <taxon>Euteleostomi</taxon>
        <taxon>Mammalia</taxon>
        <taxon>Eutheria</taxon>
        <taxon>Euarchontoglires</taxon>
        <taxon>Primates</taxon>
        <taxon>Haplorrhini</taxon>
        <taxon>Catarrhini</taxon>
        <taxon>Hominidae</taxon>
        <taxon>Homo</taxon>
    </lineage>
</organism>
<evidence type="ECO:0000256" key="1">
    <source>
        <dbReference type="SAM" id="MobiDB-lite"/>
    </source>
</evidence>
<evidence type="ECO:0000269" key="2">
    <source>
    </source>
</evidence>
<evidence type="ECO:0000305" key="3"/>
<proteinExistence type="evidence at protein level"/>
<comment type="function">
    <text>May affect the movement of lipids in the cytoplasm or allow the binding of lipids to organelles.</text>
</comment>
<comment type="interaction">
    <interactant intactId="EBI-11574440">
        <id>Q9BWW8</id>
    </interactant>
    <interactant intactId="EBI-10173507">
        <id>Q6UY14-3</id>
        <label>ADAMTSL4</label>
    </interactant>
    <organismsDiffer>false</organismsDiffer>
    <experiments>3</experiments>
</comment>
<comment type="interaction">
    <interactant intactId="EBI-11574440">
        <id>Q9BWW8</id>
    </interactant>
    <interactant intactId="EBI-3904822">
        <id>P48745</id>
        <label>CCN3</label>
    </interactant>
    <organismsDiffer>false</organismsDiffer>
    <experiments>3</experiments>
</comment>
<comment type="interaction">
    <interactant intactId="EBI-11574440">
        <id>Q9BWW8</id>
    </interactant>
    <interactant intactId="EBI-602349">
        <id>P49356</id>
        <label>FNTB</label>
    </interactant>
    <organismsDiffer>false</organismsDiffer>
    <experiments>3</experiments>
</comment>
<comment type="interaction">
    <interactant intactId="EBI-11574440">
        <id>Q9BWW8</id>
    </interactant>
    <interactant intactId="EBI-2548508">
        <id>Q96IK5</id>
        <label>GMCL1</label>
    </interactant>
    <organismsDiffer>false</organismsDiffer>
    <experiments>3</experiments>
</comment>
<comment type="interaction">
    <interactant intactId="EBI-11574440">
        <id>Q9BWW8</id>
    </interactant>
    <interactant intactId="EBI-10171774">
        <id>P60410</id>
        <label>KRTAP10-8</label>
    </interactant>
    <organismsDiffer>false</organismsDiffer>
    <experiments>3</experiments>
</comment>
<comment type="interaction">
    <interactant intactId="EBI-11574440">
        <id>Q9BWW8</id>
    </interactant>
    <interactant intactId="EBI-1038192">
        <id>Q9UHA4</id>
        <label>LAMTOR3</label>
    </interactant>
    <organismsDiffer>false</organismsDiffer>
    <experiments>3</experiments>
</comment>
<comment type="interaction">
    <interactant intactId="EBI-11574440">
        <id>Q9BWW8</id>
    </interactant>
    <interactant intactId="EBI-17843660">
        <id>O14921</id>
        <label>RGS13</label>
    </interactant>
    <organismsDiffer>false</organismsDiffer>
    <experiments>3</experiments>
</comment>
<comment type="interaction">
    <interactant intactId="EBI-11574440">
        <id>Q9BWW8</id>
    </interactant>
    <interactant intactId="EBI-11139477">
        <id>Q96N21</id>
        <label>TEPSIN</label>
    </interactant>
    <organismsDiffer>false</organismsDiffer>
    <experiments>3</experiments>
</comment>
<comment type="subcellular location">
    <subcellularLocation>
        <location evidence="3">Cytoplasm</location>
    </subcellularLocation>
</comment>
<comment type="tissue specificity">
    <text>Widely expressed; highly expressed in the uterus, fetal brain and spinal cord, also detected in heart, liver, lung, colon, spleen, thymus, prostate, placenta, adrenal gland, salivary and mammary gland.</text>
</comment>
<comment type="similarity">
    <text evidence="3">Belongs to the apolipoprotein L family.</text>
</comment>
<protein>
    <recommendedName>
        <fullName>Apolipoprotein L6</fullName>
    </recommendedName>
    <alternativeName>
        <fullName>Apolipoprotein L-VI</fullName>
        <shortName>ApoL-VI</shortName>
    </alternativeName>
</protein>
<gene>
    <name type="primary">APOL6</name>
    <name type="ORF">UNQ3095/PRO21341</name>
</gene>